<evidence type="ECO:0000250" key="1"/>
<evidence type="ECO:0000255" key="2"/>
<evidence type="ECO:0000255" key="3">
    <source>
        <dbReference type="PROSITE-ProRule" id="PRU10040"/>
    </source>
</evidence>
<evidence type="ECO:0000305" key="4"/>
<comment type="function">
    <text>May have roles in the deposition of pectin in developing tissues and in the wall loosening and cell separation that occurs in cell expansion, fruit ripening and abscission.</text>
</comment>
<comment type="catalytic activity">
    <reaction>
        <text>[(1-&gt;4)-alpha-D-galacturonosyl methyl ester](n) + n H2O = [(1-&gt;4)-alpha-D-galacturonosyl](n) + n methanol + n H(+)</text>
        <dbReference type="Rhea" id="RHEA:22380"/>
        <dbReference type="Rhea" id="RHEA-COMP:14570"/>
        <dbReference type="Rhea" id="RHEA-COMP:14573"/>
        <dbReference type="ChEBI" id="CHEBI:15377"/>
        <dbReference type="ChEBI" id="CHEBI:15378"/>
        <dbReference type="ChEBI" id="CHEBI:17790"/>
        <dbReference type="ChEBI" id="CHEBI:140522"/>
        <dbReference type="ChEBI" id="CHEBI:140523"/>
        <dbReference type="EC" id="3.1.1.11"/>
    </reaction>
</comment>
<comment type="pathway">
    <text>Glycan metabolism; pectin degradation; 2-dehydro-3-deoxy-D-gluconate from pectin: step 1/5.</text>
</comment>
<comment type="subcellular location">
    <subcellularLocation>
        <location evidence="4">Secreted</location>
        <location evidence="4">Cell wall</location>
    </subcellularLocation>
</comment>
<comment type="miscellaneous">
    <text>The PMEI region may act as an autoinhibitory domain and prevent untimely PME activity during transport.</text>
</comment>
<comment type="similarity">
    <text evidence="4">In the N-terminal section; belongs to the PMEI family.</text>
</comment>
<comment type="similarity">
    <text evidence="4">In the C-terminal section; belongs to the pectinesterase family.</text>
</comment>
<protein>
    <recommendedName>
        <fullName>Pectinesterase 3</fullName>
        <shortName>PE 3</shortName>
        <ecNumber>3.1.1.11</ecNumber>
    </recommendedName>
    <alternativeName>
        <fullName>Pectin methylesterase 3</fullName>
    </alternativeName>
</protein>
<dbReference type="EC" id="3.1.1.11"/>
<dbReference type="EMBL" id="X85216">
    <property type="protein sequence ID" value="CAA59482.1"/>
    <property type="molecule type" value="mRNA"/>
</dbReference>
<dbReference type="PIR" id="S53105">
    <property type="entry name" value="S53105"/>
</dbReference>
<dbReference type="SMR" id="Q43111"/>
<dbReference type="GlyCosmos" id="Q43111">
    <property type="glycosylation" value="6 sites, No reported glycans"/>
</dbReference>
<dbReference type="eggNOG" id="ENOG502QVK0">
    <property type="taxonomic scope" value="Eukaryota"/>
</dbReference>
<dbReference type="UniPathway" id="UPA00545">
    <property type="reaction ID" value="UER00823"/>
</dbReference>
<dbReference type="GO" id="GO:0005576">
    <property type="term" value="C:extracellular region"/>
    <property type="evidence" value="ECO:0007669"/>
    <property type="project" value="UniProtKB-KW"/>
</dbReference>
<dbReference type="GO" id="GO:0004857">
    <property type="term" value="F:enzyme inhibitor activity"/>
    <property type="evidence" value="ECO:0007669"/>
    <property type="project" value="InterPro"/>
</dbReference>
<dbReference type="GO" id="GO:0030599">
    <property type="term" value="F:pectinesterase activity"/>
    <property type="evidence" value="ECO:0007669"/>
    <property type="project" value="UniProtKB-EC"/>
</dbReference>
<dbReference type="GO" id="GO:0042545">
    <property type="term" value="P:cell wall modification"/>
    <property type="evidence" value="ECO:0007669"/>
    <property type="project" value="InterPro"/>
</dbReference>
<dbReference type="GO" id="GO:0045490">
    <property type="term" value="P:pectin catabolic process"/>
    <property type="evidence" value="ECO:0007669"/>
    <property type="project" value="UniProtKB-UniPathway"/>
</dbReference>
<dbReference type="CDD" id="cd15798">
    <property type="entry name" value="PMEI-like_3"/>
    <property type="match status" value="1"/>
</dbReference>
<dbReference type="FunFam" id="1.20.140.40:FF:000010">
    <property type="entry name" value="Pectinesterase"/>
    <property type="match status" value="1"/>
</dbReference>
<dbReference type="FunFam" id="2.160.20.10:FF:000001">
    <property type="entry name" value="Pectinesterase"/>
    <property type="match status" value="1"/>
</dbReference>
<dbReference type="Gene3D" id="1.20.140.40">
    <property type="entry name" value="Invertase/pectin methylesterase inhibitor family protein"/>
    <property type="match status" value="1"/>
</dbReference>
<dbReference type="Gene3D" id="2.160.20.10">
    <property type="entry name" value="Single-stranded right-handed beta-helix, Pectin lyase-like"/>
    <property type="match status" value="1"/>
</dbReference>
<dbReference type="InterPro" id="IPR035513">
    <property type="entry name" value="Invertase/methylesterase_inhib"/>
</dbReference>
<dbReference type="InterPro" id="IPR012334">
    <property type="entry name" value="Pectin_lyas_fold"/>
</dbReference>
<dbReference type="InterPro" id="IPR011050">
    <property type="entry name" value="Pectin_lyase_fold/virulence"/>
</dbReference>
<dbReference type="InterPro" id="IPR033131">
    <property type="entry name" value="Pectinesterase_Asp_AS"/>
</dbReference>
<dbReference type="InterPro" id="IPR000070">
    <property type="entry name" value="Pectinesterase_cat"/>
</dbReference>
<dbReference type="InterPro" id="IPR006501">
    <property type="entry name" value="Pectinesterase_inhib_dom"/>
</dbReference>
<dbReference type="InterPro" id="IPR018040">
    <property type="entry name" value="Pectinesterase_Tyr_AS"/>
</dbReference>
<dbReference type="NCBIfam" id="TIGR01614">
    <property type="entry name" value="PME_inhib"/>
    <property type="match status" value="1"/>
</dbReference>
<dbReference type="PANTHER" id="PTHR31707">
    <property type="entry name" value="PECTINESTERASE"/>
    <property type="match status" value="1"/>
</dbReference>
<dbReference type="Pfam" id="PF01095">
    <property type="entry name" value="Pectinesterase"/>
    <property type="match status" value="1"/>
</dbReference>
<dbReference type="Pfam" id="PF04043">
    <property type="entry name" value="PMEI"/>
    <property type="match status" value="1"/>
</dbReference>
<dbReference type="SMART" id="SM00856">
    <property type="entry name" value="PMEI"/>
    <property type="match status" value="1"/>
</dbReference>
<dbReference type="SUPFAM" id="SSF51126">
    <property type="entry name" value="Pectin lyase-like"/>
    <property type="match status" value="1"/>
</dbReference>
<dbReference type="SUPFAM" id="SSF101148">
    <property type="entry name" value="Plant invertase/pectin methylesterase inhibitor"/>
    <property type="match status" value="1"/>
</dbReference>
<dbReference type="PROSITE" id="PS00800">
    <property type="entry name" value="PECTINESTERASE_1"/>
    <property type="match status" value="1"/>
</dbReference>
<dbReference type="PROSITE" id="PS00503">
    <property type="entry name" value="PECTINESTERASE_2"/>
    <property type="match status" value="1"/>
</dbReference>
<keyword id="KW-0063">Aspartyl esterase</keyword>
<keyword id="KW-0134">Cell wall</keyword>
<keyword id="KW-0961">Cell wall biogenesis/degradation</keyword>
<keyword id="KW-1015">Disulfide bond</keyword>
<keyword id="KW-0325">Glycoprotein</keyword>
<keyword id="KW-0378">Hydrolase</keyword>
<keyword id="KW-0964">Secreted</keyword>
<keyword id="KW-0732">Signal</keyword>
<organism>
    <name type="scientific">Phaseolus vulgaris</name>
    <name type="common">Kidney bean</name>
    <name type="synonym">French bean</name>
    <dbReference type="NCBI Taxonomy" id="3885"/>
    <lineage>
        <taxon>Eukaryota</taxon>
        <taxon>Viridiplantae</taxon>
        <taxon>Streptophyta</taxon>
        <taxon>Embryophyta</taxon>
        <taxon>Tracheophyta</taxon>
        <taxon>Spermatophyta</taxon>
        <taxon>Magnoliopsida</taxon>
        <taxon>eudicotyledons</taxon>
        <taxon>Gunneridae</taxon>
        <taxon>Pentapetalae</taxon>
        <taxon>rosids</taxon>
        <taxon>fabids</taxon>
        <taxon>Fabales</taxon>
        <taxon>Fabaceae</taxon>
        <taxon>Papilionoideae</taxon>
        <taxon>50 kb inversion clade</taxon>
        <taxon>NPAAA clade</taxon>
        <taxon>indigoferoid/millettioid clade</taxon>
        <taxon>Phaseoleae</taxon>
        <taxon>Phaseolus</taxon>
    </lineage>
</organism>
<feature type="signal peptide" evidence="2">
    <location>
        <begin position="1"/>
        <end position="55"/>
    </location>
</feature>
<feature type="chain" id="PRO_0000023496" description="Pectinesterase 3">
    <location>
        <begin position="56"/>
        <end position="581"/>
    </location>
</feature>
<feature type="active site" description="Proton donor" evidence="3">
    <location>
        <position position="401"/>
    </location>
</feature>
<feature type="active site" description="Nucleophile" evidence="3">
    <location>
        <position position="422"/>
    </location>
</feature>
<feature type="binding site" evidence="1">
    <location>
        <position position="348"/>
    </location>
    <ligand>
        <name>substrate</name>
    </ligand>
</feature>
<feature type="binding site" evidence="1">
    <location>
        <position position="378"/>
    </location>
    <ligand>
        <name>substrate</name>
    </ligand>
</feature>
<feature type="binding site" evidence="1">
    <location>
        <position position="486"/>
    </location>
    <ligand>
        <name>substrate</name>
    </ligand>
</feature>
<feature type="binding site" evidence="1">
    <location>
        <position position="488"/>
    </location>
    <ligand>
        <name>substrate</name>
    </ligand>
</feature>
<feature type="site" description="Transition state stabilizer" evidence="1">
    <location>
        <position position="400"/>
    </location>
</feature>
<feature type="glycosylation site" description="N-linked (GlcNAc...) asparagine" evidence="2">
    <location>
        <position position="101"/>
    </location>
</feature>
<feature type="glycosylation site" description="N-linked (GlcNAc...) asparagine" evidence="2">
    <location>
        <position position="156"/>
    </location>
</feature>
<feature type="glycosylation site" description="N-linked (GlcNAc...) asparagine" evidence="2">
    <location>
        <position position="200"/>
    </location>
</feature>
<feature type="glycosylation site" description="N-linked (GlcNAc...) asparagine" evidence="2">
    <location>
        <position position="217"/>
    </location>
</feature>
<feature type="glycosylation site" description="N-linked (GlcNAc...) asparagine" evidence="2">
    <location>
        <position position="268"/>
    </location>
</feature>
<feature type="glycosylation site" description="N-linked (GlcNAc...) asparagine" evidence="2">
    <location>
        <position position="477"/>
    </location>
</feature>
<feature type="disulfide bond" evidence="1">
    <location>
        <begin position="415"/>
        <end position="435"/>
    </location>
</feature>
<proteinExistence type="evidence at transcript level"/>
<accession>Q43111</accession>
<reference key="1">
    <citation type="journal article" date="1996" name="Plant Mol. Biol.">
        <title>Characterization of pectinases and pectin methylesterase cDNAs in pods of green beans (Phaseolus vulgaris L.).</title>
        <authorList>
            <person name="Ebbelaar C.E.M."/>
            <person name="Tucker G.A."/>
            <person name="Laats J.M."/>
            <person name="van Dijk C."/>
            <person name="Stolle-Smits T."/>
            <person name="Recourt K."/>
        </authorList>
    </citation>
    <scope>NUCLEOTIDE SEQUENCE [MRNA]</scope>
    <source>
        <strain>cv. Masai</strain>
    </source>
</reference>
<gene>
    <name type="primary">MPE3</name>
</gene>
<sequence length="581" mass="63588">MDTIKSFKGYGKVNELEQQAYEKKTRKRLIIIAVSSIVLIAVIIAAVAGVVIHNRNSESSPSSDSVPQTELSPAASLKAVCDTTRYPSSCFSSISSLPESNTTDPELLFKLSLRVAIDELSSFPSKLRANAEQDARLQKAIDVCSSVFGDALDRLNDSISALGTVAGRIASSASVSNVETWLSAALTDQDTCLDAVGELNSTAARGALQEIETAMRNSTEFASNSLAIVTKILGLLSRFETPIHHRRLLGFPEWLGAAERRLLEEKNNDSTPDAVVAKDGSGQFKTIGEALKLVKKKSEERFSVYVKEGRYVENIDLDKNTWNVMIYGDGKDKTFVVGSRNFMDGTPTFETATFAVKGKGFIAKDIGFVNNAGASKHQAVALRSGSDRSVFFRCSFDGFQDTLYAHSNRQFYRDCDITGTIDFIFGNAAVVFQSCKIMPRQPLPNQFNTITAQGKKDPNQNTGIIIQKSTITPFGNNLTAPTYLGRPWKDFSTTVIMQSDIGALLNPVGWMSWVPNVEPPTTIFYAEYQNSGPGADVSQRVKWAGYKPTITDRNAEEFTVQSFIQGPEWLPNAAVQFDSTL</sequence>
<name>PME3_PHAVU</name>